<evidence type="ECO:0000255" key="1"/>
<evidence type="ECO:0000255" key="2">
    <source>
        <dbReference type="PROSITE-ProRule" id="PRU00041"/>
    </source>
</evidence>
<evidence type="ECO:0000256" key="3">
    <source>
        <dbReference type="SAM" id="MobiDB-lite"/>
    </source>
</evidence>
<evidence type="ECO:0000269" key="4">
    <source>
    </source>
</evidence>
<evidence type="ECO:0000303" key="5">
    <source>
    </source>
</evidence>
<evidence type="ECO:0000305" key="6"/>
<evidence type="ECO:0000312" key="7">
    <source>
        <dbReference type="Araport" id="AT4G00700"/>
    </source>
</evidence>
<evidence type="ECO:0000312" key="8">
    <source>
        <dbReference type="EMBL" id="AAC13630.1"/>
    </source>
</evidence>
<sequence length="1006" mass="114679">MSNIKLGVEVISAQGLLQRDKHNSCSPFVELKFDNQIFRATTKHNDPNPVWHECFYFVVSDPSVLSTRTLEAHVYSYQNEFDAKPFLGKVRVNGTSFVPRSEAAPFNYPLEKRSVFSRARGELCLRVFITDDPSVTPSVPTPVPESPQAYSPSPRKEHVKSLITADASMATDERRELKPKTRTFHNSAPLVKQQPMMNYGIHEMRAAPMPPRVVQVNGPGPSLHQLPPDFSVKETSPLLGGGRIVGGRVVRGTERPTSGTYDLVEEMKFLYVRVVKARDLPNKDLTGSLDPYVVVKIGNFKGVTTHFNKNTDPEWNQVFAFAKDNLQSNFLEVMVKDKDILLDDFVGIVKFDLREVQSRVPPDSPLAPQWYRLENKRGEKKNYEIMLAVWSGTQADEAFGDATFSDSLVDSDSSNIISANLRSKVYHSPRLWYLRVQILEAQDVIIVSDKSRVPEVFVRVKVGNQMLRTKFPQRSNNPKWGDEFTFVVAEPFEDNLVLSVEDHTAPNRDEPVGKAVILMNDIEKRIDDKPFHDRWVHLEDSISDAMDVDKAKKVKFATRLRYKAVLDGGYHVFDESMYNSSDLRPSSRKLWKPAIGVLELGILNANVFHSMKTREGKGTSDTYVVAKYGHKWVRSRTVINSMNPKYNEQYTWEVFDPATVLTICVFDNAHFAAGDGGNKRDQPIGKVRIRLSTLQTGRVYTHAYPLLVLQPTGLKKRGELHLAVRFTCTSVSSMLMKYTKPLLPKMHYILPLSTNQQEALKMQAINIIIVRLGRSEPPLRREVVDYLTDWKSQLFSMRRSKANFNRFTTVFSGALSVWKWMEQVCTWKTPVTTALVHVLYTMLVTFPEMILPTVFLYMAVIGMWNYRFKPRFPPHMDAKLSYADNVNSDELDEEFDTFPTVRAPDIVKMRYDRLRSVAGKVQSVAGDIAAQGERVQALLSWRDPRATAIFVTFCFIIAMALYITPFKLVALLSGYYFMRHPKLRHRIPSAPVNFFRRLPAMTDSML</sequence>
<dbReference type="EMBL" id="AF058919">
    <property type="protein sequence ID" value="AAC13630.1"/>
    <property type="status" value="ALT_SEQ"/>
    <property type="molecule type" value="Genomic_DNA"/>
</dbReference>
<dbReference type="EMBL" id="AL161472">
    <property type="protein sequence ID" value="CAB80879.1"/>
    <property type="status" value="ALT_SEQ"/>
    <property type="molecule type" value="Genomic_DNA"/>
</dbReference>
<dbReference type="EMBL" id="CP002687">
    <property type="protein sequence ID" value="AEE81923.1"/>
    <property type="molecule type" value="Genomic_DNA"/>
</dbReference>
<dbReference type="EMBL" id="CP002687">
    <property type="protein sequence ID" value="ANM66307.1"/>
    <property type="molecule type" value="Genomic_DNA"/>
</dbReference>
<dbReference type="EMBL" id="AY080664">
    <property type="protein sequence ID" value="AAL86340.1"/>
    <property type="molecule type" value="mRNA"/>
</dbReference>
<dbReference type="PIR" id="T01234">
    <property type="entry name" value="T01234"/>
</dbReference>
<dbReference type="RefSeq" id="NP_001328213.1">
    <property type="nucleotide sequence ID" value="NM_001340264.1"/>
</dbReference>
<dbReference type="RefSeq" id="NP_191979.2">
    <property type="nucleotide sequence ID" value="NM_116295.4"/>
</dbReference>
<dbReference type="SMR" id="Q8RXU9"/>
<dbReference type="FunCoup" id="Q8RXU9">
    <property type="interactions" value="214"/>
</dbReference>
<dbReference type="STRING" id="3702.Q8RXU9"/>
<dbReference type="PaxDb" id="3702-AT4G00700.1"/>
<dbReference type="ProteomicsDB" id="183065"/>
<dbReference type="EnsemblPlants" id="AT4G00700.1">
    <property type="protein sequence ID" value="AT4G00700.1"/>
    <property type="gene ID" value="AT4G00700"/>
</dbReference>
<dbReference type="EnsemblPlants" id="AT4G00700.2">
    <property type="protein sequence ID" value="AT4G00700.2"/>
    <property type="gene ID" value="AT4G00700"/>
</dbReference>
<dbReference type="GeneID" id="828031"/>
<dbReference type="Gramene" id="AT4G00700.1">
    <property type="protein sequence ID" value="AT4G00700.1"/>
    <property type="gene ID" value="AT4G00700"/>
</dbReference>
<dbReference type="Gramene" id="AT4G00700.2">
    <property type="protein sequence ID" value="AT4G00700.2"/>
    <property type="gene ID" value="AT4G00700"/>
</dbReference>
<dbReference type="KEGG" id="ath:AT4G00700"/>
<dbReference type="Araport" id="AT4G00700"/>
<dbReference type="TAIR" id="AT4G00700">
    <property type="gene designation" value="MCTP9"/>
</dbReference>
<dbReference type="eggNOG" id="ENOG502QR9H">
    <property type="taxonomic scope" value="Eukaryota"/>
</dbReference>
<dbReference type="HOGENOM" id="CLU_003762_1_0_1"/>
<dbReference type="InParanoid" id="Q8RXU9"/>
<dbReference type="OMA" id="ICVFDNA"/>
<dbReference type="PRO" id="PR:Q8RXU9"/>
<dbReference type="Proteomes" id="UP000006548">
    <property type="component" value="Chromosome 4"/>
</dbReference>
<dbReference type="ExpressionAtlas" id="Q8RXU9">
    <property type="expression patterns" value="baseline and differential"/>
</dbReference>
<dbReference type="GO" id="GO:0005829">
    <property type="term" value="C:cytosol"/>
    <property type="evidence" value="ECO:0000314"/>
    <property type="project" value="TAIR"/>
</dbReference>
<dbReference type="GO" id="GO:0005886">
    <property type="term" value="C:plasma membrane"/>
    <property type="evidence" value="ECO:0007669"/>
    <property type="project" value="UniProtKB-SubCell"/>
</dbReference>
<dbReference type="GO" id="GO:0046872">
    <property type="term" value="F:metal ion binding"/>
    <property type="evidence" value="ECO:0007669"/>
    <property type="project" value="UniProtKB-KW"/>
</dbReference>
<dbReference type="CDD" id="cd04022">
    <property type="entry name" value="C2A_MCTP_PRT_plant"/>
    <property type="match status" value="1"/>
</dbReference>
<dbReference type="CDD" id="cd08378">
    <property type="entry name" value="C2B_MCTP_PRT_plant"/>
    <property type="match status" value="1"/>
</dbReference>
<dbReference type="CDD" id="cd04019">
    <property type="entry name" value="C2C_MCTP_PRT_plant"/>
    <property type="match status" value="1"/>
</dbReference>
<dbReference type="CDD" id="cd08379">
    <property type="entry name" value="C2D_MCTP_PRT_plant"/>
    <property type="match status" value="1"/>
</dbReference>
<dbReference type="FunFam" id="2.60.40.150:FF:000323">
    <property type="entry name" value="C2 calcium/lipid-binding plant phosphoribosyltransferase family protein"/>
    <property type="match status" value="1"/>
</dbReference>
<dbReference type="FunFam" id="2.60.40.150:FF:000090">
    <property type="entry name" value="C2 domain-containing protein"/>
    <property type="match status" value="1"/>
</dbReference>
<dbReference type="FunFam" id="2.60.40.150:FF:000119">
    <property type="entry name" value="C2 domain-containing protein"/>
    <property type="match status" value="1"/>
</dbReference>
<dbReference type="FunFam" id="2.60.40.150:FF:000128">
    <property type="entry name" value="C2 domain-containing protein"/>
    <property type="match status" value="1"/>
</dbReference>
<dbReference type="Gene3D" id="2.60.40.150">
    <property type="entry name" value="C2 domain"/>
    <property type="match status" value="4"/>
</dbReference>
<dbReference type="InterPro" id="IPR000008">
    <property type="entry name" value="C2_dom"/>
</dbReference>
<dbReference type="InterPro" id="IPR035892">
    <property type="entry name" value="C2_domain_sf"/>
</dbReference>
<dbReference type="InterPro" id="IPR047257">
    <property type="entry name" value="C2B_MCTP_PRT_plant"/>
</dbReference>
<dbReference type="InterPro" id="IPR047258">
    <property type="entry name" value="C2C_MCTP_PRT_plant"/>
</dbReference>
<dbReference type="InterPro" id="IPR047255">
    <property type="entry name" value="C2D_MCTP_PRT_plant"/>
</dbReference>
<dbReference type="InterPro" id="IPR013583">
    <property type="entry name" value="MCTP_C"/>
</dbReference>
<dbReference type="InterPro" id="IPR047259">
    <property type="entry name" value="QUIRKY-like"/>
</dbReference>
<dbReference type="PANTHER" id="PTHR31425:SF32">
    <property type="entry name" value="MULTIPLE C2 DOMAIN AND TRANSMEMBRANE REGION PROTEIN 9"/>
    <property type="match status" value="1"/>
</dbReference>
<dbReference type="PANTHER" id="PTHR31425">
    <property type="entry name" value="PHOSPHORIBOSYLANTHRANILATE TRANSFERASE ISOFORM 1"/>
    <property type="match status" value="1"/>
</dbReference>
<dbReference type="Pfam" id="PF00168">
    <property type="entry name" value="C2"/>
    <property type="match status" value="4"/>
</dbReference>
<dbReference type="Pfam" id="PF08372">
    <property type="entry name" value="PRT_C"/>
    <property type="match status" value="1"/>
</dbReference>
<dbReference type="SMART" id="SM00239">
    <property type="entry name" value="C2"/>
    <property type="match status" value="4"/>
</dbReference>
<dbReference type="SUPFAM" id="SSF49562">
    <property type="entry name" value="C2 domain (Calcium/lipid-binding domain, CaLB)"/>
    <property type="match status" value="4"/>
</dbReference>
<dbReference type="PROSITE" id="PS50004">
    <property type="entry name" value="C2"/>
    <property type="match status" value="4"/>
</dbReference>
<keyword id="KW-0106">Calcium</keyword>
<keyword id="KW-1003">Cell membrane</keyword>
<keyword id="KW-0963">Cytoplasm</keyword>
<keyword id="KW-0472">Membrane</keyword>
<keyword id="KW-0479">Metal-binding</keyword>
<keyword id="KW-1185">Reference proteome</keyword>
<keyword id="KW-0677">Repeat</keyword>
<keyword id="KW-0812">Transmembrane</keyword>
<keyword id="KW-1133">Transmembrane helix</keyword>
<organism>
    <name type="scientific">Arabidopsis thaliana</name>
    <name type="common">Mouse-ear cress</name>
    <dbReference type="NCBI Taxonomy" id="3702"/>
    <lineage>
        <taxon>Eukaryota</taxon>
        <taxon>Viridiplantae</taxon>
        <taxon>Streptophyta</taxon>
        <taxon>Embryophyta</taxon>
        <taxon>Tracheophyta</taxon>
        <taxon>Spermatophyta</taxon>
        <taxon>Magnoliopsida</taxon>
        <taxon>eudicotyledons</taxon>
        <taxon>Gunneridae</taxon>
        <taxon>Pentapetalae</taxon>
        <taxon>rosids</taxon>
        <taxon>malvids</taxon>
        <taxon>Brassicales</taxon>
        <taxon>Brassicaceae</taxon>
        <taxon>Camelineae</taxon>
        <taxon>Arabidopsis</taxon>
    </lineage>
</organism>
<proteinExistence type="evidence at transcript level"/>
<feature type="chain" id="PRO_0000457903" description="Multiple C2 domain and transmembrane region protein 9">
    <location>
        <begin position="1"/>
        <end position="1006"/>
    </location>
</feature>
<feature type="transmembrane region" description="Helical" evidence="1">
    <location>
        <begin position="842"/>
        <end position="862"/>
    </location>
</feature>
<feature type="transmembrane region" description="Helical" evidence="1">
    <location>
        <begin position="946"/>
        <end position="966"/>
    </location>
</feature>
<feature type="domain" description="C2 1" evidence="2">
    <location>
        <begin position="1"/>
        <end position="108"/>
    </location>
</feature>
<feature type="domain" description="C2 2" evidence="2">
    <location>
        <begin position="251"/>
        <end position="371"/>
    </location>
</feature>
<feature type="domain" description="C2 3" evidence="2">
    <location>
        <begin position="411"/>
        <end position="536"/>
    </location>
</feature>
<feature type="domain" description="C2 4" evidence="2">
    <location>
        <begin position="579"/>
        <end position="704"/>
    </location>
</feature>
<feature type="region of interest" description="Disordered" evidence="3">
    <location>
        <begin position="135"/>
        <end position="156"/>
    </location>
</feature>
<feature type="binding site" evidence="2">
    <location>
        <position position="284"/>
    </location>
    <ligand>
        <name>Ca(2+)</name>
        <dbReference type="ChEBI" id="CHEBI:29108"/>
        <label>1</label>
    </ligand>
</feature>
<feature type="binding site" evidence="2">
    <location>
        <position position="284"/>
    </location>
    <ligand>
        <name>Ca(2+)</name>
        <dbReference type="ChEBI" id="CHEBI:29108"/>
        <label>2</label>
    </ligand>
</feature>
<feature type="binding site" evidence="2">
    <location>
        <position position="290"/>
    </location>
    <ligand>
        <name>Ca(2+)</name>
        <dbReference type="ChEBI" id="CHEBI:29108"/>
        <label>1</label>
    </ligand>
</feature>
<feature type="binding site" evidence="2">
    <location>
        <position position="337"/>
    </location>
    <ligand>
        <name>Ca(2+)</name>
        <dbReference type="ChEBI" id="CHEBI:29108"/>
        <label>1</label>
    </ligand>
</feature>
<feature type="binding site" evidence="2">
    <location>
        <position position="337"/>
    </location>
    <ligand>
        <name>Ca(2+)</name>
        <dbReference type="ChEBI" id="CHEBI:29108"/>
        <label>2</label>
    </ligand>
</feature>
<feature type="binding site" evidence="2">
    <location>
        <position position="339"/>
    </location>
    <ligand>
        <name>Ca(2+)</name>
        <dbReference type="ChEBI" id="CHEBI:29108"/>
        <label>1</label>
    </ligand>
</feature>
<feature type="binding site" evidence="2">
    <location>
        <position position="339"/>
    </location>
    <ligand>
        <name>Ca(2+)</name>
        <dbReference type="ChEBI" id="CHEBI:29108"/>
        <label>2</label>
    </ligand>
</feature>
<feature type="binding site" evidence="2">
    <location>
        <position position="344"/>
    </location>
    <ligand>
        <name>Ca(2+)</name>
        <dbReference type="ChEBI" id="CHEBI:29108"/>
        <label>2</label>
    </ligand>
</feature>
<name>MCTP9_ARATH</name>
<accession>Q8RXU9</accession>
<accession>O65279</accession>
<reference key="1">
    <citation type="journal article" date="1999" name="Nature">
        <title>Sequence and analysis of chromosome 4 of the plant Arabidopsis thaliana.</title>
        <authorList>
            <person name="Mayer K.F.X."/>
            <person name="Schueller C."/>
            <person name="Wambutt R."/>
            <person name="Murphy G."/>
            <person name="Volckaert G."/>
            <person name="Pohl T."/>
            <person name="Duesterhoeft A."/>
            <person name="Stiekema W."/>
            <person name="Entian K.-D."/>
            <person name="Terryn N."/>
            <person name="Harris B."/>
            <person name="Ansorge W."/>
            <person name="Brandt P."/>
            <person name="Grivell L.A."/>
            <person name="Rieger M."/>
            <person name="Weichselgartner M."/>
            <person name="de Simone V."/>
            <person name="Obermaier B."/>
            <person name="Mache R."/>
            <person name="Mueller M."/>
            <person name="Kreis M."/>
            <person name="Delseny M."/>
            <person name="Puigdomenech P."/>
            <person name="Watson M."/>
            <person name="Schmidtheini T."/>
            <person name="Reichert B."/>
            <person name="Portetelle D."/>
            <person name="Perez-Alonso M."/>
            <person name="Boutry M."/>
            <person name="Bancroft I."/>
            <person name="Vos P."/>
            <person name="Hoheisel J."/>
            <person name="Zimmermann W."/>
            <person name="Wedler H."/>
            <person name="Ridley P."/>
            <person name="Langham S.-A."/>
            <person name="McCullagh B."/>
            <person name="Bilham L."/>
            <person name="Robben J."/>
            <person name="van der Schueren J."/>
            <person name="Grymonprez B."/>
            <person name="Chuang Y.-J."/>
            <person name="Vandenbussche F."/>
            <person name="Braeken M."/>
            <person name="Weltjens I."/>
            <person name="Voet M."/>
            <person name="Bastiaens I."/>
            <person name="Aert R."/>
            <person name="Defoor E."/>
            <person name="Weitzenegger T."/>
            <person name="Bothe G."/>
            <person name="Ramsperger U."/>
            <person name="Hilbert H."/>
            <person name="Braun M."/>
            <person name="Holzer E."/>
            <person name="Brandt A."/>
            <person name="Peters S."/>
            <person name="van Staveren M."/>
            <person name="Dirkse W."/>
            <person name="Mooijman P."/>
            <person name="Klein Lankhorst R."/>
            <person name="Rose M."/>
            <person name="Hauf J."/>
            <person name="Koetter P."/>
            <person name="Berneiser S."/>
            <person name="Hempel S."/>
            <person name="Feldpausch M."/>
            <person name="Lamberth S."/>
            <person name="Van den Daele H."/>
            <person name="De Keyser A."/>
            <person name="Buysshaert C."/>
            <person name="Gielen J."/>
            <person name="Villarroel R."/>
            <person name="De Clercq R."/>
            <person name="van Montagu M."/>
            <person name="Rogers J."/>
            <person name="Cronin A."/>
            <person name="Quail M.A."/>
            <person name="Bray-Allen S."/>
            <person name="Clark L."/>
            <person name="Doggett J."/>
            <person name="Hall S."/>
            <person name="Kay M."/>
            <person name="Lennard N."/>
            <person name="McLay K."/>
            <person name="Mayes R."/>
            <person name="Pettett A."/>
            <person name="Rajandream M.A."/>
            <person name="Lyne M."/>
            <person name="Benes V."/>
            <person name="Rechmann S."/>
            <person name="Borkova D."/>
            <person name="Bloecker H."/>
            <person name="Scharfe M."/>
            <person name="Grimm M."/>
            <person name="Loehnert T.-H."/>
            <person name="Dose S."/>
            <person name="de Haan M."/>
            <person name="Maarse A.C."/>
            <person name="Schaefer M."/>
            <person name="Mueller-Auer S."/>
            <person name="Gabel C."/>
            <person name="Fuchs M."/>
            <person name="Fartmann B."/>
            <person name="Granderath K."/>
            <person name="Dauner D."/>
            <person name="Herzl A."/>
            <person name="Neumann S."/>
            <person name="Argiriou A."/>
            <person name="Vitale D."/>
            <person name="Liguori R."/>
            <person name="Piravandi E."/>
            <person name="Massenet O."/>
            <person name="Quigley F."/>
            <person name="Clabauld G."/>
            <person name="Muendlein A."/>
            <person name="Felber R."/>
            <person name="Schnabl S."/>
            <person name="Hiller R."/>
            <person name="Schmidt W."/>
            <person name="Lecharny A."/>
            <person name="Aubourg S."/>
            <person name="Chefdor F."/>
            <person name="Cooke R."/>
            <person name="Berger C."/>
            <person name="Monfort A."/>
            <person name="Casacuberta E."/>
            <person name="Gibbons T."/>
            <person name="Weber N."/>
            <person name="Vandenbol M."/>
            <person name="Bargues M."/>
            <person name="Terol J."/>
            <person name="Torres A."/>
            <person name="Perez-Perez A."/>
            <person name="Purnelle B."/>
            <person name="Bent E."/>
            <person name="Johnson S."/>
            <person name="Tacon D."/>
            <person name="Jesse T."/>
            <person name="Heijnen L."/>
            <person name="Schwarz S."/>
            <person name="Scholler P."/>
            <person name="Heber S."/>
            <person name="Francs P."/>
            <person name="Bielke C."/>
            <person name="Frishman D."/>
            <person name="Haase D."/>
            <person name="Lemcke K."/>
            <person name="Mewes H.-W."/>
            <person name="Stocker S."/>
            <person name="Zaccaria P."/>
            <person name="Bevan M."/>
            <person name="Wilson R.K."/>
            <person name="de la Bastide M."/>
            <person name="Habermann K."/>
            <person name="Parnell L."/>
            <person name="Dedhia N."/>
            <person name="Gnoj L."/>
            <person name="Schutz K."/>
            <person name="Huang E."/>
            <person name="Spiegel L."/>
            <person name="Sekhon M."/>
            <person name="Murray J."/>
            <person name="Sheet P."/>
            <person name="Cordes M."/>
            <person name="Abu-Threideh J."/>
            <person name="Stoneking T."/>
            <person name="Kalicki J."/>
            <person name="Graves T."/>
            <person name="Harmon G."/>
            <person name="Edwards J."/>
            <person name="Latreille P."/>
            <person name="Courtney L."/>
            <person name="Cloud J."/>
            <person name="Abbott A."/>
            <person name="Scott K."/>
            <person name="Johnson D."/>
            <person name="Minx P."/>
            <person name="Bentley D."/>
            <person name="Fulton B."/>
            <person name="Miller N."/>
            <person name="Greco T."/>
            <person name="Kemp K."/>
            <person name="Kramer J."/>
            <person name="Fulton L."/>
            <person name="Mardis E."/>
            <person name="Dante M."/>
            <person name="Pepin K."/>
            <person name="Hillier L.W."/>
            <person name="Nelson J."/>
            <person name="Spieth J."/>
            <person name="Ryan E."/>
            <person name="Andrews S."/>
            <person name="Geisel C."/>
            <person name="Layman D."/>
            <person name="Du H."/>
            <person name="Ali J."/>
            <person name="Berghoff A."/>
            <person name="Jones K."/>
            <person name="Drone K."/>
            <person name="Cotton M."/>
            <person name="Joshu C."/>
            <person name="Antonoiu B."/>
            <person name="Zidanic M."/>
            <person name="Strong C."/>
            <person name="Sun H."/>
            <person name="Lamar B."/>
            <person name="Yordan C."/>
            <person name="Ma P."/>
            <person name="Zhong J."/>
            <person name="Preston R."/>
            <person name="Vil D."/>
            <person name="Shekher M."/>
            <person name="Matero A."/>
            <person name="Shah R."/>
            <person name="Swaby I.K."/>
            <person name="O'Shaughnessy A."/>
            <person name="Rodriguez M."/>
            <person name="Hoffman J."/>
            <person name="Till S."/>
            <person name="Granat S."/>
            <person name="Shohdy N."/>
            <person name="Hasegawa A."/>
            <person name="Hameed A."/>
            <person name="Lodhi M."/>
            <person name="Johnson A."/>
            <person name="Chen E."/>
            <person name="Marra M.A."/>
            <person name="Martienssen R."/>
            <person name="McCombie W.R."/>
        </authorList>
    </citation>
    <scope>NUCLEOTIDE SEQUENCE [LARGE SCALE GENOMIC DNA]</scope>
    <source>
        <strain>cv. Columbia</strain>
    </source>
</reference>
<reference key="2">
    <citation type="journal article" date="2017" name="Plant J.">
        <title>Araport11: a complete reannotation of the Arabidopsis thaliana reference genome.</title>
        <authorList>
            <person name="Cheng C.Y."/>
            <person name="Krishnakumar V."/>
            <person name="Chan A.P."/>
            <person name="Thibaud-Nissen F."/>
            <person name="Schobel S."/>
            <person name="Town C.D."/>
        </authorList>
    </citation>
    <scope>GENOME REANNOTATION</scope>
    <source>
        <strain>cv. Columbia</strain>
    </source>
</reference>
<reference key="3">
    <citation type="journal article" date="2003" name="Science">
        <title>Empirical analysis of transcriptional activity in the Arabidopsis genome.</title>
        <authorList>
            <person name="Yamada K."/>
            <person name="Lim J."/>
            <person name="Dale J.M."/>
            <person name="Chen H."/>
            <person name="Shinn P."/>
            <person name="Palm C.J."/>
            <person name="Southwick A.M."/>
            <person name="Wu H.C."/>
            <person name="Kim C.J."/>
            <person name="Nguyen M."/>
            <person name="Pham P.K."/>
            <person name="Cheuk R.F."/>
            <person name="Karlin-Newmann G."/>
            <person name="Liu S.X."/>
            <person name="Lam B."/>
            <person name="Sakano H."/>
            <person name="Wu T."/>
            <person name="Yu G."/>
            <person name="Miranda M."/>
            <person name="Quach H.L."/>
            <person name="Tripp M."/>
            <person name="Chang C.H."/>
            <person name="Lee J.M."/>
            <person name="Toriumi M.J."/>
            <person name="Chan M.M."/>
            <person name="Tang C.C."/>
            <person name="Onodera C.S."/>
            <person name="Deng J.M."/>
            <person name="Akiyama K."/>
            <person name="Ansari Y."/>
            <person name="Arakawa T."/>
            <person name="Banh J."/>
            <person name="Banno F."/>
            <person name="Bowser L."/>
            <person name="Brooks S.Y."/>
            <person name="Carninci P."/>
            <person name="Chao Q."/>
            <person name="Choy N."/>
            <person name="Enju A."/>
            <person name="Goldsmith A.D."/>
            <person name="Gurjal M."/>
            <person name="Hansen N.F."/>
            <person name="Hayashizaki Y."/>
            <person name="Johnson-Hopson C."/>
            <person name="Hsuan V.W."/>
            <person name="Iida K."/>
            <person name="Karnes M."/>
            <person name="Khan S."/>
            <person name="Koesema E."/>
            <person name="Ishida J."/>
            <person name="Jiang P.X."/>
            <person name="Jones T."/>
            <person name="Kawai J."/>
            <person name="Kamiya A."/>
            <person name="Meyers C."/>
            <person name="Nakajima M."/>
            <person name="Narusaka M."/>
            <person name="Seki M."/>
            <person name="Sakurai T."/>
            <person name="Satou M."/>
            <person name="Tamse R."/>
            <person name="Vaysberg M."/>
            <person name="Wallender E.K."/>
            <person name="Wong C."/>
            <person name="Yamamura Y."/>
            <person name="Yuan S."/>
            <person name="Shinozaki K."/>
            <person name="Davis R.W."/>
            <person name="Theologis A."/>
            <person name="Ecker J.R."/>
        </authorList>
    </citation>
    <scope>NUCLEOTIDE SEQUENCE [LARGE SCALE MRNA]</scope>
    <source>
        <strain>cv. Columbia</strain>
    </source>
</reference>
<reference key="4">
    <citation type="journal article" date="2018" name="Plant Physiol.">
        <title>Characterization of multiple C2 domain and transmembrane region proteins in Arabidopsis.</title>
        <authorList>
            <person name="Liu L."/>
            <person name="Li C."/>
            <person name="Liang Z."/>
            <person name="Yu H."/>
        </authorList>
    </citation>
    <scope>TISSUE SPECIFICITY</scope>
    <scope>DEVELOPMENTAL STAGE</scope>
    <scope>SUBCELLULAR LOCATION</scope>
    <scope>GENE FAMILY</scope>
    <scope>NOMENCLATURE</scope>
    <source>
        <strain>cv. Columbia</strain>
    </source>
</reference>
<comment type="function">
    <text evidence="5">May function as a signaling molecule by regulating the trafficking of other regulators.</text>
</comment>
<comment type="cofactor">
    <cofactor evidence="2">
        <name>Ca(2+)</name>
        <dbReference type="ChEBI" id="CHEBI:29108"/>
    </cofactor>
</comment>
<comment type="subcellular location">
    <subcellularLocation>
        <location evidence="4">Cell membrane</location>
        <topology evidence="1">Multi-pass membrane protein</topology>
    </subcellularLocation>
    <subcellularLocation>
        <location evidence="4">Cytoplasm</location>
    </subcellularLocation>
</comment>
<comment type="tissue specificity">
    <text evidence="4">Expressed in incipient leaf primordia and roots meristems (PubMed:29259105). Observed in flowers (PubMed:29259105).</text>
</comment>
<comment type="developmental stage">
    <text evidence="4">Present at late stages in developing flowers.</text>
</comment>
<comment type="similarity">
    <text evidence="6">Belongs to the MCTP family.</text>
</comment>
<comment type="sequence caution" evidence="6">
    <conflict type="erroneous gene model prediction">
        <sequence resource="EMBL-CDS" id="AAC13630"/>
    </conflict>
</comment>
<comment type="sequence caution" evidence="6">
    <conflict type="erroneous gene model prediction">
        <sequence resource="EMBL-CDS" id="CAB80879"/>
    </conflict>
</comment>
<protein>
    <recommendedName>
        <fullName evidence="5">Multiple C2 domain and transmembrane region protein 9</fullName>
    </recommendedName>
</protein>
<gene>
    <name evidence="5" type="primary">MCTP9</name>
    <name evidence="7" type="ordered locus">At4g00700</name>
    <name evidence="8" type="ORF">F6N23.8</name>
</gene>